<sequence>MLDNTRLRIAIQKSGRLSDDSRELLARCGIKINLHTQRLIAMAENMPIDILRVRDDDIPGLVMDGVVDLGIIGENVLEEELLNRRAQGEDPRYFTLRRLDFGGCRLSLATPVDEAWDGPAALDGKRIATSYPHLLKRYLDQKGVSFKSCLLNGSVEVAPRAGLADAICDLVSTGATLEANGLREVEVIYRSKACLIQRDGEMAQSKQQLIDKLLTRIQGVIQARESKYIMMHAPSERLEEVIALLPGAERPTILPLAGEQQRVAMHMVSSETLFWETMEKLKALGASSILVLPIEKMME</sequence>
<dbReference type="EC" id="2.4.2.17" evidence="1"/>
<dbReference type="EMBL" id="AM933173">
    <property type="protein sequence ID" value="CAR37942.1"/>
    <property type="molecule type" value="Genomic_DNA"/>
</dbReference>
<dbReference type="RefSeq" id="WP_000886600.1">
    <property type="nucleotide sequence ID" value="NC_011274.1"/>
</dbReference>
<dbReference type="SMR" id="B5RBR1"/>
<dbReference type="KEGG" id="seg:SG2101"/>
<dbReference type="HOGENOM" id="CLU_038115_1_0_6"/>
<dbReference type="UniPathway" id="UPA00031">
    <property type="reaction ID" value="UER00006"/>
</dbReference>
<dbReference type="Proteomes" id="UP000008321">
    <property type="component" value="Chromosome"/>
</dbReference>
<dbReference type="GO" id="GO:0005737">
    <property type="term" value="C:cytoplasm"/>
    <property type="evidence" value="ECO:0007669"/>
    <property type="project" value="UniProtKB-SubCell"/>
</dbReference>
<dbReference type="GO" id="GO:0005524">
    <property type="term" value="F:ATP binding"/>
    <property type="evidence" value="ECO:0007669"/>
    <property type="project" value="UniProtKB-KW"/>
</dbReference>
<dbReference type="GO" id="GO:0003879">
    <property type="term" value="F:ATP phosphoribosyltransferase activity"/>
    <property type="evidence" value="ECO:0007669"/>
    <property type="project" value="UniProtKB-UniRule"/>
</dbReference>
<dbReference type="GO" id="GO:0000287">
    <property type="term" value="F:magnesium ion binding"/>
    <property type="evidence" value="ECO:0007669"/>
    <property type="project" value="UniProtKB-UniRule"/>
</dbReference>
<dbReference type="GO" id="GO:0000105">
    <property type="term" value="P:L-histidine biosynthetic process"/>
    <property type="evidence" value="ECO:0007669"/>
    <property type="project" value="UniProtKB-UniRule"/>
</dbReference>
<dbReference type="CDD" id="cd13592">
    <property type="entry name" value="PBP2_HisGL2"/>
    <property type="match status" value="1"/>
</dbReference>
<dbReference type="FunFam" id="3.30.70.120:FF:000002">
    <property type="entry name" value="ATP phosphoribosyltransferase"/>
    <property type="match status" value="1"/>
</dbReference>
<dbReference type="FunFam" id="3.40.190.10:FF:000008">
    <property type="entry name" value="ATP phosphoribosyltransferase"/>
    <property type="match status" value="1"/>
</dbReference>
<dbReference type="Gene3D" id="3.30.70.120">
    <property type="match status" value="1"/>
</dbReference>
<dbReference type="Gene3D" id="3.40.190.10">
    <property type="entry name" value="Periplasmic binding protein-like II"/>
    <property type="match status" value="2"/>
</dbReference>
<dbReference type="HAMAP" id="MF_00079">
    <property type="entry name" value="HisG_Long"/>
    <property type="match status" value="1"/>
</dbReference>
<dbReference type="InterPro" id="IPR020621">
    <property type="entry name" value="ATP-PRT_HisG_long"/>
</dbReference>
<dbReference type="InterPro" id="IPR013820">
    <property type="entry name" value="ATP_PRibTrfase_cat"/>
</dbReference>
<dbReference type="InterPro" id="IPR018198">
    <property type="entry name" value="ATP_PRibTrfase_CS"/>
</dbReference>
<dbReference type="InterPro" id="IPR001348">
    <property type="entry name" value="ATP_PRibTrfase_HisG"/>
</dbReference>
<dbReference type="InterPro" id="IPR013115">
    <property type="entry name" value="HisG_C"/>
</dbReference>
<dbReference type="InterPro" id="IPR011322">
    <property type="entry name" value="N-reg_PII-like_a/b"/>
</dbReference>
<dbReference type="InterPro" id="IPR015867">
    <property type="entry name" value="N-reg_PII/ATP_PRibTrfase_C"/>
</dbReference>
<dbReference type="NCBIfam" id="TIGR00070">
    <property type="entry name" value="hisG"/>
    <property type="match status" value="1"/>
</dbReference>
<dbReference type="NCBIfam" id="TIGR03455">
    <property type="entry name" value="HisG_C-term"/>
    <property type="match status" value="1"/>
</dbReference>
<dbReference type="PANTHER" id="PTHR21403:SF8">
    <property type="entry name" value="ATP PHOSPHORIBOSYLTRANSFERASE"/>
    <property type="match status" value="1"/>
</dbReference>
<dbReference type="PANTHER" id="PTHR21403">
    <property type="entry name" value="ATP PHOSPHORIBOSYLTRANSFERASE ATP-PRTASE"/>
    <property type="match status" value="1"/>
</dbReference>
<dbReference type="Pfam" id="PF01634">
    <property type="entry name" value="HisG"/>
    <property type="match status" value="1"/>
</dbReference>
<dbReference type="Pfam" id="PF08029">
    <property type="entry name" value="HisG_C"/>
    <property type="match status" value="1"/>
</dbReference>
<dbReference type="SUPFAM" id="SSF54913">
    <property type="entry name" value="GlnB-like"/>
    <property type="match status" value="1"/>
</dbReference>
<dbReference type="SUPFAM" id="SSF53850">
    <property type="entry name" value="Periplasmic binding protein-like II"/>
    <property type="match status" value="1"/>
</dbReference>
<dbReference type="PROSITE" id="PS01316">
    <property type="entry name" value="ATP_P_PHORIBOSYLTR"/>
    <property type="match status" value="1"/>
</dbReference>
<comment type="function">
    <text evidence="1">Catalyzes the condensation of ATP and 5-phosphoribose 1-diphosphate to form N'-(5'-phosphoribosyl)-ATP (PR-ATP). Has a crucial role in the pathway because the rate of histidine biosynthesis seems to be controlled primarily by regulation of HisG enzymatic activity.</text>
</comment>
<comment type="catalytic activity">
    <reaction evidence="1">
        <text>1-(5-phospho-beta-D-ribosyl)-ATP + diphosphate = 5-phospho-alpha-D-ribose 1-diphosphate + ATP</text>
        <dbReference type="Rhea" id="RHEA:18473"/>
        <dbReference type="ChEBI" id="CHEBI:30616"/>
        <dbReference type="ChEBI" id="CHEBI:33019"/>
        <dbReference type="ChEBI" id="CHEBI:58017"/>
        <dbReference type="ChEBI" id="CHEBI:73183"/>
        <dbReference type="EC" id="2.4.2.17"/>
    </reaction>
</comment>
<comment type="cofactor">
    <cofactor evidence="1">
        <name>Mg(2+)</name>
        <dbReference type="ChEBI" id="CHEBI:18420"/>
    </cofactor>
</comment>
<comment type="activity regulation">
    <text evidence="1">Feedback inhibited by histidine.</text>
</comment>
<comment type="pathway">
    <text evidence="1">Amino-acid biosynthesis; L-histidine biosynthesis; L-histidine from 5-phospho-alpha-D-ribose 1-diphosphate: step 1/9.</text>
</comment>
<comment type="subunit">
    <text evidence="1">Equilibrium between an active dimeric form, an inactive hexameric form and higher aggregates. Interconversion between the various forms is largely reversible and is influenced by the natural substrates and inhibitors of the enzyme.</text>
</comment>
<comment type="subcellular location">
    <subcellularLocation>
        <location evidence="1">Cytoplasm</location>
    </subcellularLocation>
</comment>
<comment type="similarity">
    <text evidence="1">Belongs to the ATP phosphoribosyltransferase family. Long subfamily.</text>
</comment>
<keyword id="KW-0028">Amino-acid biosynthesis</keyword>
<keyword id="KW-0067">ATP-binding</keyword>
<keyword id="KW-0963">Cytoplasm</keyword>
<keyword id="KW-0328">Glycosyltransferase</keyword>
<keyword id="KW-0368">Histidine biosynthesis</keyword>
<keyword id="KW-0460">Magnesium</keyword>
<keyword id="KW-0479">Metal-binding</keyword>
<keyword id="KW-0547">Nucleotide-binding</keyword>
<keyword id="KW-0808">Transferase</keyword>
<evidence type="ECO:0000255" key="1">
    <source>
        <dbReference type="HAMAP-Rule" id="MF_00079"/>
    </source>
</evidence>
<gene>
    <name evidence="1" type="primary">hisG</name>
    <name type="ordered locus">SG2101</name>
</gene>
<reference key="1">
    <citation type="journal article" date="2008" name="Genome Res.">
        <title>Comparative genome analysis of Salmonella enteritidis PT4 and Salmonella gallinarum 287/91 provides insights into evolutionary and host adaptation pathways.</title>
        <authorList>
            <person name="Thomson N.R."/>
            <person name="Clayton D.J."/>
            <person name="Windhorst D."/>
            <person name="Vernikos G."/>
            <person name="Davidson S."/>
            <person name="Churcher C."/>
            <person name="Quail M.A."/>
            <person name="Stevens M."/>
            <person name="Jones M.A."/>
            <person name="Watson M."/>
            <person name="Barron A."/>
            <person name="Layton A."/>
            <person name="Pickard D."/>
            <person name="Kingsley R.A."/>
            <person name="Bignell A."/>
            <person name="Clark L."/>
            <person name="Harris B."/>
            <person name="Ormond D."/>
            <person name="Abdellah Z."/>
            <person name="Brooks K."/>
            <person name="Cherevach I."/>
            <person name="Chillingworth T."/>
            <person name="Woodward J."/>
            <person name="Norberczak H."/>
            <person name="Lord A."/>
            <person name="Arrowsmith C."/>
            <person name="Jagels K."/>
            <person name="Moule S."/>
            <person name="Mungall K."/>
            <person name="Saunders M."/>
            <person name="Whitehead S."/>
            <person name="Chabalgoity J.A."/>
            <person name="Maskell D."/>
            <person name="Humphreys T."/>
            <person name="Roberts M."/>
            <person name="Barrow P.A."/>
            <person name="Dougan G."/>
            <person name="Parkhill J."/>
        </authorList>
    </citation>
    <scope>NUCLEOTIDE SEQUENCE [LARGE SCALE GENOMIC DNA]</scope>
    <source>
        <strain>287/91 / NCTC 13346</strain>
    </source>
</reference>
<proteinExistence type="inferred from homology"/>
<name>HIS1_SALG2</name>
<accession>B5RBR1</accession>
<organism>
    <name type="scientific">Salmonella gallinarum (strain 287/91 / NCTC 13346)</name>
    <dbReference type="NCBI Taxonomy" id="550538"/>
    <lineage>
        <taxon>Bacteria</taxon>
        <taxon>Pseudomonadati</taxon>
        <taxon>Pseudomonadota</taxon>
        <taxon>Gammaproteobacteria</taxon>
        <taxon>Enterobacterales</taxon>
        <taxon>Enterobacteriaceae</taxon>
        <taxon>Salmonella</taxon>
    </lineage>
</organism>
<protein>
    <recommendedName>
        <fullName evidence="1">ATP phosphoribosyltransferase</fullName>
        <shortName evidence="1">ATP-PRT</shortName>
        <shortName evidence="1">ATP-PRTase</shortName>
        <ecNumber evidence="1">2.4.2.17</ecNumber>
    </recommendedName>
</protein>
<feature type="chain" id="PRO_1000092747" description="ATP phosphoribosyltransferase">
    <location>
        <begin position="1"/>
        <end position="299"/>
    </location>
</feature>